<protein>
    <recommendedName>
        <fullName evidence="1">Large ribosomal subunit protein uL2</fullName>
    </recommendedName>
    <alternativeName>
        <fullName evidence="3">50S ribosomal protein L2</fullName>
    </alternativeName>
</protein>
<accession>Q0AUI3</accession>
<reference key="1">
    <citation type="journal article" date="2010" name="Environ. Microbiol.">
        <title>The genome of Syntrophomonas wolfei: new insights into syntrophic metabolism and biohydrogen production.</title>
        <authorList>
            <person name="Sieber J.R."/>
            <person name="Sims D.R."/>
            <person name="Han C."/>
            <person name="Kim E."/>
            <person name="Lykidis A."/>
            <person name="Lapidus A.L."/>
            <person name="McDonnald E."/>
            <person name="Rohlin L."/>
            <person name="Culley D.E."/>
            <person name="Gunsalus R."/>
            <person name="McInerney M.J."/>
        </authorList>
    </citation>
    <scope>NUCLEOTIDE SEQUENCE [LARGE SCALE GENOMIC DNA]</scope>
    <source>
        <strain>DSM 2245B / Goettingen</strain>
    </source>
</reference>
<feature type="chain" id="PRO_0000310035" description="Large ribosomal subunit protein uL2">
    <location>
        <begin position="1"/>
        <end position="275"/>
    </location>
</feature>
<feature type="region of interest" description="Disordered" evidence="2">
    <location>
        <begin position="222"/>
        <end position="243"/>
    </location>
</feature>
<feature type="region of interest" description="Disordered" evidence="2">
    <location>
        <begin position="256"/>
        <end position="275"/>
    </location>
</feature>
<sequence>MGIKKFKPTTPSRRHMTTMSFEEITKQEPEKSLIAPLKRKAGRNVKGRITVRHRGGGHKRQYRIVDFRRVKDNVPARVAAIEYDPNRSAHIALLHYFDGHKAYIIAPHNLRVGDVIESGPNADIKTGNTLPLKDIPVGSLIHNIELRPGKGAQLVRSAGAVAQLMAKEGAYAHVRLPSGEVRLIHVNCRATIGQVGNLEHENMTLGKAGRSRWLGIRPGVRGSVMNPTDHPHGGGEGRAPIGRKYPVSPWGKIAIGGKTRRKKPSDNMIVRKRKP</sequence>
<evidence type="ECO:0000255" key="1">
    <source>
        <dbReference type="HAMAP-Rule" id="MF_01320"/>
    </source>
</evidence>
<evidence type="ECO:0000256" key="2">
    <source>
        <dbReference type="SAM" id="MobiDB-lite"/>
    </source>
</evidence>
<evidence type="ECO:0000305" key="3"/>
<dbReference type="EMBL" id="CP000448">
    <property type="protein sequence ID" value="ABI69621.1"/>
    <property type="molecule type" value="Genomic_DNA"/>
</dbReference>
<dbReference type="RefSeq" id="WP_011641705.1">
    <property type="nucleotide sequence ID" value="NC_008346.1"/>
</dbReference>
<dbReference type="SMR" id="Q0AUI3"/>
<dbReference type="STRING" id="335541.Swol_2330"/>
<dbReference type="KEGG" id="swo:Swol_2330"/>
<dbReference type="eggNOG" id="COG0090">
    <property type="taxonomic scope" value="Bacteria"/>
</dbReference>
<dbReference type="HOGENOM" id="CLU_036235_2_1_9"/>
<dbReference type="OrthoDB" id="9778722at2"/>
<dbReference type="Proteomes" id="UP000001968">
    <property type="component" value="Chromosome"/>
</dbReference>
<dbReference type="GO" id="GO:0015934">
    <property type="term" value="C:large ribosomal subunit"/>
    <property type="evidence" value="ECO:0007669"/>
    <property type="project" value="InterPro"/>
</dbReference>
<dbReference type="GO" id="GO:0019843">
    <property type="term" value="F:rRNA binding"/>
    <property type="evidence" value="ECO:0007669"/>
    <property type="project" value="UniProtKB-UniRule"/>
</dbReference>
<dbReference type="GO" id="GO:0003735">
    <property type="term" value="F:structural constituent of ribosome"/>
    <property type="evidence" value="ECO:0007669"/>
    <property type="project" value="InterPro"/>
</dbReference>
<dbReference type="GO" id="GO:0016740">
    <property type="term" value="F:transferase activity"/>
    <property type="evidence" value="ECO:0007669"/>
    <property type="project" value="InterPro"/>
</dbReference>
<dbReference type="GO" id="GO:0002181">
    <property type="term" value="P:cytoplasmic translation"/>
    <property type="evidence" value="ECO:0007669"/>
    <property type="project" value="TreeGrafter"/>
</dbReference>
<dbReference type="FunFam" id="2.30.30.30:FF:000001">
    <property type="entry name" value="50S ribosomal protein L2"/>
    <property type="match status" value="1"/>
</dbReference>
<dbReference type="FunFam" id="2.40.50.140:FF:000003">
    <property type="entry name" value="50S ribosomal protein L2"/>
    <property type="match status" value="1"/>
</dbReference>
<dbReference type="FunFam" id="4.10.950.10:FF:000001">
    <property type="entry name" value="50S ribosomal protein L2"/>
    <property type="match status" value="1"/>
</dbReference>
<dbReference type="Gene3D" id="2.30.30.30">
    <property type="match status" value="1"/>
</dbReference>
<dbReference type="Gene3D" id="2.40.50.140">
    <property type="entry name" value="Nucleic acid-binding proteins"/>
    <property type="match status" value="1"/>
</dbReference>
<dbReference type="Gene3D" id="4.10.950.10">
    <property type="entry name" value="Ribosomal protein L2, domain 3"/>
    <property type="match status" value="1"/>
</dbReference>
<dbReference type="HAMAP" id="MF_01320_B">
    <property type="entry name" value="Ribosomal_uL2_B"/>
    <property type="match status" value="1"/>
</dbReference>
<dbReference type="InterPro" id="IPR012340">
    <property type="entry name" value="NA-bd_OB-fold"/>
</dbReference>
<dbReference type="InterPro" id="IPR014722">
    <property type="entry name" value="Rib_uL2_dom2"/>
</dbReference>
<dbReference type="InterPro" id="IPR002171">
    <property type="entry name" value="Ribosomal_uL2"/>
</dbReference>
<dbReference type="InterPro" id="IPR005880">
    <property type="entry name" value="Ribosomal_uL2_bac/org-type"/>
</dbReference>
<dbReference type="InterPro" id="IPR022669">
    <property type="entry name" value="Ribosomal_uL2_C"/>
</dbReference>
<dbReference type="InterPro" id="IPR022671">
    <property type="entry name" value="Ribosomal_uL2_CS"/>
</dbReference>
<dbReference type="InterPro" id="IPR014726">
    <property type="entry name" value="Ribosomal_uL2_dom3"/>
</dbReference>
<dbReference type="InterPro" id="IPR022666">
    <property type="entry name" value="Ribosomal_uL2_RNA-bd_dom"/>
</dbReference>
<dbReference type="InterPro" id="IPR008991">
    <property type="entry name" value="Translation_prot_SH3-like_sf"/>
</dbReference>
<dbReference type="NCBIfam" id="TIGR01171">
    <property type="entry name" value="rplB_bact"/>
    <property type="match status" value="1"/>
</dbReference>
<dbReference type="PANTHER" id="PTHR13691:SF5">
    <property type="entry name" value="LARGE RIBOSOMAL SUBUNIT PROTEIN UL2M"/>
    <property type="match status" value="1"/>
</dbReference>
<dbReference type="PANTHER" id="PTHR13691">
    <property type="entry name" value="RIBOSOMAL PROTEIN L2"/>
    <property type="match status" value="1"/>
</dbReference>
<dbReference type="Pfam" id="PF00181">
    <property type="entry name" value="Ribosomal_L2"/>
    <property type="match status" value="1"/>
</dbReference>
<dbReference type="Pfam" id="PF03947">
    <property type="entry name" value="Ribosomal_L2_C"/>
    <property type="match status" value="1"/>
</dbReference>
<dbReference type="PIRSF" id="PIRSF002158">
    <property type="entry name" value="Ribosomal_L2"/>
    <property type="match status" value="1"/>
</dbReference>
<dbReference type="SMART" id="SM01383">
    <property type="entry name" value="Ribosomal_L2"/>
    <property type="match status" value="1"/>
</dbReference>
<dbReference type="SMART" id="SM01382">
    <property type="entry name" value="Ribosomal_L2_C"/>
    <property type="match status" value="1"/>
</dbReference>
<dbReference type="SUPFAM" id="SSF50249">
    <property type="entry name" value="Nucleic acid-binding proteins"/>
    <property type="match status" value="1"/>
</dbReference>
<dbReference type="SUPFAM" id="SSF50104">
    <property type="entry name" value="Translation proteins SH3-like domain"/>
    <property type="match status" value="1"/>
</dbReference>
<dbReference type="PROSITE" id="PS00467">
    <property type="entry name" value="RIBOSOMAL_L2"/>
    <property type="match status" value="1"/>
</dbReference>
<name>RL2_SYNWW</name>
<keyword id="KW-1185">Reference proteome</keyword>
<keyword id="KW-0687">Ribonucleoprotein</keyword>
<keyword id="KW-0689">Ribosomal protein</keyword>
<keyword id="KW-0694">RNA-binding</keyword>
<keyword id="KW-0699">rRNA-binding</keyword>
<comment type="function">
    <text evidence="1">One of the primary rRNA binding proteins. Required for association of the 30S and 50S subunits to form the 70S ribosome, for tRNA binding and peptide bond formation. It has been suggested to have peptidyltransferase activity; this is somewhat controversial. Makes several contacts with the 16S rRNA in the 70S ribosome.</text>
</comment>
<comment type="subunit">
    <text evidence="1">Part of the 50S ribosomal subunit. Forms a bridge to the 30S subunit in the 70S ribosome.</text>
</comment>
<comment type="similarity">
    <text evidence="1">Belongs to the universal ribosomal protein uL2 family.</text>
</comment>
<organism>
    <name type="scientific">Syntrophomonas wolfei subsp. wolfei (strain DSM 2245B / Goettingen)</name>
    <dbReference type="NCBI Taxonomy" id="335541"/>
    <lineage>
        <taxon>Bacteria</taxon>
        <taxon>Bacillati</taxon>
        <taxon>Bacillota</taxon>
        <taxon>Clostridia</taxon>
        <taxon>Eubacteriales</taxon>
        <taxon>Syntrophomonadaceae</taxon>
        <taxon>Syntrophomonas</taxon>
    </lineage>
</organism>
<gene>
    <name evidence="1" type="primary">rplB</name>
    <name type="ordered locus">Swol_2330</name>
</gene>
<proteinExistence type="inferred from homology"/>